<name>PGRP2_MOUSE</name>
<proteinExistence type="evidence at protein level"/>
<protein>
    <recommendedName>
        <fullName>N-acetylmuramoyl-L-alanine amidase</fullName>
        <ecNumber>3.5.1.28</ecNumber>
    </recommendedName>
    <alternativeName>
        <fullName>Peptidoglycan recognition protein 2</fullName>
    </alternativeName>
    <alternativeName>
        <fullName>Peptidoglycan recognition protein long</fullName>
        <shortName>PGRP-L</shortName>
    </alternativeName>
    <alternativeName>
        <fullName>TagL</fullName>
    </alternativeName>
</protein>
<accession>Q8VCS0</accession>
<accession>Q8K4I8</accession>
<accession>Q9QXZ1</accession>
<accession>Q9QXZ2</accession>
<sequence>MKAWGALWIVLGLLLWPEPGAASSLPLLMDSIIQALAELEQKVPVTEASITASAWILSAKNSSTHNSLHQRLLLKAPSHNTTEPDPHSLSPELQALISEVAQHDVQNGREYGVVLAPDGSTVAVKPLLFGLEAGLQAHSVANLPSDCLAIPCDTGDTLANIRATWPGLMDAFPNASSPDVGATLPNDKAKTPTTVDRLLAITLAGDLGLTFLHRSQTWSPPGLGTEGCWDQLTAPRVFTLLDPQASRLTMAFLNGALDGALLGNHLSQIPRPHPPLSHLLREYYGAGVNGDPVFRSNFRRQNGAALTSAPTLAQQVWEALVLLQKLEPEHLQLQNISQEQLAQVATLATKEFTEAFLGCPAIHPRCRWGAAPYRGHPTPLRLPLGFLYVHHTYVPAPPCTTFQSCAADMRSMQRFHQDVRKWDDIGYSFVVGSDGYLYQGRGWHWVGAHTRGYNSRGFGVAFVGNYTGSLPNEAALNTVRDALPSCAIRAGLLRPDYKLLGHRQLVLTHCPGNALFNLLRTWPHFTEVEN</sequence>
<gene>
    <name type="primary">Pglyrp2</name>
    <name type="synonym">Pglyrpl</name>
    <name type="synonym">Pgrpl</name>
</gene>
<reference key="1">
    <citation type="journal article" date="2003" name="Biochem. Biophys. Res. Commun.">
        <title>A mammalian peptidoglycan recognition protein with N-acetylmuramoyl-L-alanine amidase activity.</title>
        <authorList>
            <person name="Gelius E."/>
            <person name="Persson C."/>
            <person name="Karlsson J."/>
            <person name="Steiner H."/>
        </authorList>
    </citation>
    <scope>NUCLEOTIDE SEQUENCE [MRNA] (ISOFORM 1)</scope>
    <scope>PROTEIN SEQUENCE OF 23-37</scope>
    <source>
        <strain>C57BL/6J</strain>
    </source>
</reference>
<reference key="2">
    <citation type="journal article" date="2003" name="J. Mol. Biol.">
        <title>The differentially spliced mouse tagL gene, homolog of tag7/PGRP gene family in mammals and Drosophila, can recognize Gram-positive and Gram-negative bacterial cell wall independently of T phage lysozyme homology domain.</title>
        <authorList>
            <person name="Kibardin A.V."/>
            <person name="Mirkina I.I."/>
            <person name="Baranova E.V."/>
            <person name="Zakeyeva I.R."/>
            <person name="Georgiev G.P."/>
            <person name="Kiselev S.L."/>
        </authorList>
    </citation>
    <scope>NUCLEOTIDE SEQUENCE [MRNA] (ISOFORMS 1; 2 AND 3)</scope>
</reference>
<reference key="3">
    <citation type="journal article" date="2004" name="Genome Res.">
        <title>The status, quality, and expansion of the NIH full-length cDNA project: the Mammalian Gene Collection (MGC).</title>
        <authorList>
            <consortium name="The MGC Project Team"/>
        </authorList>
    </citation>
    <scope>NUCLEOTIDE SEQUENCE [LARGE SCALE MRNA] (ISOFORM 1)</scope>
    <source>
        <tissue>Liver</tissue>
    </source>
</reference>
<reference key="4">
    <citation type="journal article" date="2006" name="J. Proteome Res.">
        <title>Proteome-wide characterization of N-glycosylation events by diagonal chromatography.</title>
        <authorList>
            <person name="Ghesquiere B."/>
            <person name="Van Damme J."/>
            <person name="Martens L."/>
            <person name="Vandekerckhove J."/>
            <person name="Gevaert K."/>
        </authorList>
    </citation>
    <scope>GLYCOSYLATION [LARGE SCALE ANALYSIS] AT ASN-335</scope>
    <source>
        <strain>C57BL/6J</strain>
        <tissue>Plasma</tissue>
    </source>
</reference>
<keyword id="KW-0025">Alternative splicing</keyword>
<keyword id="KW-0903">Direct protein sequencing</keyword>
<keyword id="KW-1015">Disulfide bond</keyword>
<keyword id="KW-0325">Glycoprotein</keyword>
<keyword id="KW-0378">Hydrolase</keyword>
<keyword id="KW-0391">Immunity</keyword>
<keyword id="KW-0472">Membrane</keyword>
<keyword id="KW-0479">Metal-binding</keyword>
<keyword id="KW-0597">Phosphoprotein</keyword>
<keyword id="KW-1185">Reference proteome</keyword>
<keyword id="KW-0964">Secreted</keyword>
<keyword id="KW-0732">Signal</keyword>
<keyword id="KW-0862">Zinc</keyword>
<feature type="signal peptide" evidence="6">
    <location>
        <begin position="1"/>
        <end position="22"/>
    </location>
</feature>
<feature type="chain" id="PRO_0000023921" description="N-acetylmuramoyl-L-alanine amidase">
    <location>
        <begin position="23"/>
        <end position="530"/>
    </location>
</feature>
<feature type="domain" description="N-acetylmuramoyl-L-alanine amidase" evidence="5">
    <location>
        <begin position="386"/>
        <end position="512"/>
    </location>
</feature>
<feature type="binding site" evidence="3">
    <location>
        <position position="390"/>
    </location>
    <ligand>
        <name>Zn(2+)</name>
        <dbReference type="ChEBI" id="CHEBI:29105"/>
    </ligand>
</feature>
<feature type="binding site" evidence="3">
    <location>
        <position position="502"/>
    </location>
    <ligand>
        <name>Zn(2+)</name>
        <dbReference type="ChEBI" id="CHEBI:29105"/>
    </ligand>
</feature>
<feature type="binding site" evidence="3">
    <location>
        <position position="510"/>
    </location>
    <ligand>
        <name>Zn(2+)</name>
        <dbReference type="ChEBI" id="CHEBI:29105"/>
    </ligand>
</feature>
<feature type="site" description="Important for catalytic activity; essential for amidase activity and zinc hydrate coordination" evidence="2">
    <location>
        <position position="427"/>
    </location>
</feature>
<feature type="modified residue" description="Phosphoserine" evidence="4">
    <location>
        <position position="219"/>
    </location>
</feature>
<feature type="glycosylation site" description="N-linked (GlcNAc...) asparagine" evidence="5">
    <location>
        <position position="61"/>
    </location>
</feature>
<feature type="glycosylation site" description="N-linked (GlcNAc...) asparagine" evidence="5">
    <location>
        <position position="80"/>
    </location>
</feature>
<feature type="glycosylation site" description="N-linked (GlcNAc...) asparagine" evidence="5">
    <location>
        <position position="174"/>
    </location>
</feature>
<feature type="glycosylation site" description="N-linked (GlcNAc...) asparagine" evidence="7">
    <location>
        <position position="335"/>
    </location>
</feature>
<feature type="glycosylation site" description="N-linked (GlcNAc...) asparagine" evidence="1">
    <location>
        <position position="465"/>
    </location>
</feature>
<feature type="disulfide bond" evidence="4">
    <location>
        <begin position="399"/>
        <end position="405"/>
    </location>
</feature>
<feature type="splice variant" id="VSP_009081" description="In isoform 2." evidence="8">
    <location>
        <begin position="338"/>
        <end position="366"/>
    </location>
</feature>
<feature type="splice variant" id="VSP_009079" description="In isoform 3." evidence="8">
    <original>SFVVGSDGYLYQGRGWHWVGAHT</original>
    <variation>RLKTKNSFERPLKIQEVLSLMIL</variation>
    <location>
        <begin position="428"/>
        <end position="450"/>
    </location>
</feature>
<feature type="splice variant" id="VSP_009080" description="In isoform 3." evidence="8">
    <location>
        <begin position="451"/>
        <end position="530"/>
    </location>
</feature>
<feature type="sequence conflict" description="In Ref. 2; AAF22233/AAF22234." evidence="9" ref="2">
    <location>
        <position position="486"/>
    </location>
</feature>
<organism>
    <name type="scientific">Mus musculus</name>
    <name type="common">Mouse</name>
    <dbReference type="NCBI Taxonomy" id="10090"/>
    <lineage>
        <taxon>Eukaryota</taxon>
        <taxon>Metazoa</taxon>
        <taxon>Chordata</taxon>
        <taxon>Craniata</taxon>
        <taxon>Vertebrata</taxon>
        <taxon>Euteleostomi</taxon>
        <taxon>Mammalia</taxon>
        <taxon>Eutheria</taxon>
        <taxon>Euarchontoglires</taxon>
        <taxon>Glires</taxon>
        <taxon>Rodentia</taxon>
        <taxon>Myomorpha</taxon>
        <taxon>Muroidea</taxon>
        <taxon>Muridae</taxon>
        <taxon>Murinae</taxon>
        <taxon>Mus</taxon>
        <taxon>Mus</taxon>
    </lineage>
</organism>
<evidence type="ECO:0000250" key="1"/>
<evidence type="ECO:0000250" key="2">
    <source>
        <dbReference type="UniProtKB" id="P00806"/>
    </source>
</evidence>
<evidence type="ECO:0000250" key="3">
    <source>
        <dbReference type="UniProtKB" id="Q8INK6"/>
    </source>
</evidence>
<evidence type="ECO:0000250" key="4">
    <source>
        <dbReference type="UniProtKB" id="Q96PD5"/>
    </source>
</evidence>
<evidence type="ECO:0000255" key="5"/>
<evidence type="ECO:0000269" key="6">
    <source>
    </source>
</evidence>
<evidence type="ECO:0000269" key="7">
    <source>
    </source>
</evidence>
<evidence type="ECO:0000303" key="8">
    <source>
    </source>
</evidence>
<evidence type="ECO:0000305" key="9"/>
<comment type="function">
    <text>May play a scavenger role by digesting biologically active peptidoglycan (PGN) into biologically inactive fragments. Has no direct bacteriolytic activity.</text>
</comment>
<comment type="catalytic activity">
    <reaction>
        <text>Hydrolyzes the link between N-acetylmuramoyl residues and L-amino acid residues in certain cell-wall glycopeptides.</text>
        <dbReference type="EC" id="3.5.1.28"/>
    </reaction>
</comment>
<comment type="cofactor">
    <cofactor evidence="2">
        <name>Zn(2+)</name>
        <dbReference type="ChEBI" id="CHEBI:29105"/>
    </cofactor>
</comment>
<comment type="subcellular location">
    <subcellularLocation>
        <location>Secreted</location>
    </subcellularLocation>
    <subcellularLocation>
        <location>Membrane</location>
    </subcellularLocation>
</comment>
<comment type="alternative products">
    <event type="alternative splicing"/>
    <isoform>
        <id>Q8VCS0-1</id>
        <name>1</name>
        <name>TagL-alpha</name>
        <sequence type="displayed"/>
    </isoform>
    <isoform>
        <id>Q8VCS0-2</id>
        <name>2</name>
        <name>TagL-beta</name>
        <sequence type="described" ref="VSP_009081"/>
    </isoform>
    <isoform>
        <id>Q8VCS0-3</id>
        <name>3</name>
        <name>TagL-epsilon</name>
        <sequence type="described" ref="VSP_009079 VSP_009080"/>
    </isoform>
</comment>
<comment type="tissue specificity">
    <text>Strongly expressed in liver and fetal liver.</text>
</comment>
<comment type="similarity">
    <text evidence="9">Belongs to the N-acetylmuramoyl-L-alanine amidase 2 family.</text>
</comment>
<dbReference type="EC" id="3.5.1.28"/>
<dbReference type="EMBL" id="AY282722">
    <property type="protein sequence ID" value="AAP22283.1"/>
    <property type="molecule type" value="mRNA"/>
</dbReference>
<dbReference type="EMBL" id="AF392055">
    <property type="protein sequence ID" value="AAM73674.1"/>
    <property type="molecule type" value="mRNA"/>
</dbReference>
<dbReference type="EMBL" id="AF149837">
    <property type="protein sequence ID" value="AAF22233.1"/>
    <property type="molecule type" value="mRNA"/>
</dbReference>
<dbReference type="EMBL" id="AF149838">
    <property type="protein sequence ID" value="AAF22234.1"/>
    <property type="molecule type" value="mRNA"/>
</dbReference>
<dbReference type="EMBL" id="BC019396">
    <property type="protein sequence ID" value="AAH19396.1"/>
    <property type="molecule type" value="mRNA"/>
</dbReference>
<dbReference type="CCDS" id="CCDS37557.1">
    <molecule id="Q8VCS0-1"/>
</dbReference>
<dbReference type="CCDS" id="CCDS89065.1">
    <molecule id="Q8VCS0-3"/>
</dbReference>
<dbReference type="RefSeq" id="NP_001258405.1">
    <molecule id="Q8VCS0-1"/>
    <property type="nucleotide sequence ID" value="NM_001271476.1"/>
</dbReference>
<dbReference type="RefSeq" id="NP_001258407.1">
    <molecule id="Q8VCS0-3"/>
    <property type="nucleotide sequence ID" value="NM_001271478.1"/>
</dbReference>
<dbReference type="RefSeq" id="NP_001258408.1">
    <property type="nucleotide sequence ID" value="NM_001271479.1"/>
</dbReference>
<dbReference type="RefSeq" id="NP_067294.2">
    <molecule id="Q8VCS0-1"/>
    <property type="nucleotide sequence ID" value="NM_021319.5"/>
</dbReference>
<dbReference type="RefSeq" id="XP_006524777.1">
    <molecule id="Q8VCS0-3"/>
    <property type="nucleotide sequence ID" value="XM_006524714.4"/>
</dbReference>
<dbReference type="SMR" id="Q8VCS0"/>
<dbReference type="FunCoup" id="Q8VCS0">
    <property type="interactions" value="20"/>
</dbReference>
<dbReference type="STRING" id="10090.ENSMUSP00000158365"/>
<dbReference type="GlyCosmos" id="Q8VCS0">
    <property type="glycosylation" value="5 sites, No reported glycans"/>
</dbReference>
<dbReference type="GlyGen" id="Q8VCS0">
    <property type="glycosylation" value="5 sites, 2 N-linked glycans (2 sites)"/>
</dbReference>
<dbReference type="iPTMnet" id="Q8VCS0"/>
<dbReference type="PhosphoSitePlus" id="Q8VCS0"/>
<dbReference type="CPTAC" id="non-CPTAC-5616"/>
<dbReference type="PaxDb" id="10090-ENSMUSP00000129964"/>
<dbReference type="PeptideAtlas" id="Q8VCS0"/>
<dbReference type="ProteomicsDB" id="288107">
    <molecule id="Q8VCS0-1"/>
</dbReference>
<dbReference type="ProteomicsDB" id="288108">
    <molecule id="Q8VCS0-2"/>
</dbReference>
<dbReference type="ProteomicsDB" id="288109">
    <molecule id="Q8VCS0-3"/>
</dbReference>
<dbReference type="Antibodypedia" id="43600">
    <property type="antibodies" value="97 antibodies from 23 providers"/>
</dbReference>
<dbReference type="DNASU" id="57757"/>
<dbReference type="Ensembl" id="ENSMUST00000170392.9">
    <molecule id="Q8VCS0-1"/>
    <property type="protein sequence ID" value="ENSMUSP00000129964.2"/>
    <property type="gene ID" value="ENSMUSG00000079563.11"/>
</dbReference>
<dbReference type="Ensembl" id="ENSMUST00000236386.2">
    <molecule id="Q8VCS0-1"/>
    <property type="protein sequence ID" value="ENSMUSP00000158365.2"/>
    <property type="gene ID" value="ENSMUSG00000079563.11"/>
</dbReference>
<dbReference type="Ensembl" id="ENSMUST00000237130.2">
    <molecule id="Q8VCS0-3"/>
    <property type="protein sequence ID" value="ENSMUSP00000157771.2"/>
    <property type="gene ID" value="ENSMUSG00000079563.11"/>
</dbReference>
<dbReference type="GeneID" id="57757"/>
<dbReference type="KEGG" id="mmu:57757"/>
<dbReference type="UCSC" id="uc008bxa.3">
    <molecule id="Q8VCS0-1"/>
    <property type="organism name" value="mouse"/>
</dbReference>
<dbReference type="UCSC" id="uc008bxc.3">
    <molecule id="Q8VCS0-3"/>
    <property type="organism name" value="mouse"/>
</dbReference>
<dbReference type="AGR" id="MGI:1928099"/>
<dbReference type="CTD" id="114770"/>
<dbReference type="MGI" id="MGI:1928099">
    <property type="gene designation" value="Pglyrp2"/>
</dbReference>
<dbReference type="VEuPathDB" id="HostDB:ENSMUSG00000079563"/>
<dbReference type="eggNOG" id="ENOG502QR3D">
    <property type="taxonomic scope" value="Eukaryota"/>
</dbReference>
<dbReference type="GeneTree" id="ENSGT00940000158718"/>
<dbReference type="HOGENOM" id="CLU_038892_0_0_1"/>
<dbReference type="InParanoid" id="Q8VCS0"/>
<dbReference type="OMA" id="MDCPPII"/>
<dbReference type="OrthoDB" id="10001926at2759"/>
<dbReference type="PhylomeDB" id="Q8VCS0"/>
<dbReference type="TreeFam" id="TF323898"/>
<dbReference type="Reactome" id="R-MMU-6803157">
    <property type="pathway name" value="Antimicrobial peptides"/>
</dbReference>
<dbReference type="BioGRID-ORCS" id="57757">
    <property type="hits" value="2 hits in 77 CRISPR screens"/>
</dbReference>
<dbReference type="PRO" id="PR:Q8VCS0"/>
<dbReference type="Proteomes" id="UP000000589">
    <property type="component" value="Chromosome 17"/>
</dbReference>
<dbReference type="RNAct" id="Q8VCS0">
    <property type="molecule type" value="protein"/>
</dbReference>
<dbReference type="Bgee" id="ENSMUSG00000079563">
    <property type="expression patterns" value="Expressed in left lobe of liver and 42 other cell types or tissues"/>
</dbReference>
<dbReference type="ExpressionAtlas" id="Q8VCS0">
    <property type="expression patterns" value="baseline and differential"/>
</dbReference>
<dbReference type="GO" id="GO:0005576">
    <property type="term" value="C:extracellular region"/>
    <property type="evidence" value="ECO:0007669"/>
    <property type="project" value="UniProtKB-SubCell"/>
</dbReference>
<dbReference type="GO" id="GO:0016020">
    <property type="term" value="C:membrane"/>
    <property type="evidence" value="ECO:0007669"/>
    <property type="project" value="UniProtKB-SubCell"/>
</dbReference>
<dbReference type="GO" id="GO:0008745">
    <property type="term" value="F:N-acetylmuramoyl-L-alanine amidase activity"/>
    <property type="evidence" value="ECO:0007669"/>
    <property type="project" value="UniProtKB-EC"/>
</dbReference>
<dbReference type="GO" id="GO:0042834">
    <property type="term" value="F:peptidoglycan binding"/>
    <property type="evidence" value="ECO:0000250"/>
    <property type="project" value="UniProtKB"/>
</dbReference>
<dbReference type="GO" id="GO:0016019">
    <property type="term" value="F:peptidoglycan immune receptor activity"/>
    <property type="evidence" value="ECO:0000250"/>
    <property type="project" value="UniProtKB"/>
</dbReference>
<dbReference type="GO" id="GO:0008270">
    <property type="term" value="F:zinc ion binding"/>
    <property type="evidence" value="ECO:0007669"/>
    <property type="project" value="InterPro"/>
</dbReference>
<dbReference type="GO" id="GO:0051701">
    <property type="term" value="P:biological process involved in interaction with host"/>
    <property type="evidence" value="ECO:0000315"/>
    <property type="project" value="MGI"/>
</dbReference>
<dbReference type="GO" id="GO:0050830">
    <property type="term" value="P:defense response to Gram-positive bacterium"/>
    <property type="evidence" value="ECO:0000250"/>
    <property type="project" value="UniProtKB"/>
</dbReference>
<dbReference type="GO" id="GO:0016045">
    <property type="term" value="P:detection of bacterium"/>
    <property type="evidence" value="ECO:0000250"/>
    <property type="project" value="UniProtKB"/>
</dbReference>
<dbReference type="GO" id="GO:0002376">
    <property type="term" value="P:immune system process"/>
    <property type="evidence" value="ECO:0007669"/>
    <property type="project" value="UniProtKB-KW"/>
</dbReference>
<dbReference type="GO" id="GO:0032827">
    <property type="term" value="P:negative regulation of natural killer cell differentiation involved in immune response"/>
    <property type="evidence" value="ECO:0000315"/>
    <property type="project" value="MGI"/>
</dbReference>
<dbReference type="GO" id="GO:0032689">
    <property type="term" value="P:negative regulation of type II interferon production"/>
    <property type="evidence" value="ECO:0000315"/>
    <property type="project" value="MGI"/>
</dbReference>
<dbReference type="GO" id="GO:0009253">
    <property type="term" value="P:peptidoglycan catabolic process"/>
    <property type="evidence" value="ECO:0007669"/>
    <property type="project" value="InterPro"/>
</dbReference>
<dbReference type="GO" id="GO:0050727">
    <property type="term" value="P:regulation of inflammatory response"/>
    <property type="evidence" value="ECO:0000315"/>
    <property type="project" value="MGI"/>
</dbReference>
<dbReference type="CDD" id="cd06583">
    <property type="entry name" value="PGRP"/>
    <property type="match status" value="1"/>
</dbReference>
<dbReference type="FunFam" id="3.40.80.10:FF:000001">
    <property type="entry name" value="Peptidoglycan recognition protein 1"/>
    <property type="match status" value="1"/>
</dbReference>
<dbReference type="Gene3D" id="3.40.80.10">
    <property type="entry name" value="Peptidoglycan recognition protein-like"/>
    <property type="match status" value="1"/>
</dbReference>
<dbReference type="InterPro" id="IPR036505">
    <property type="entry name" value="Amidase/PGRP_sf"/>
</dbReference>
<dbReference type="InterPro" id="IPR002502">
    <property type="entry name" value="Amidase_domain"/>
</dbReference>
<dbReference type="InterPro" id="IPR015510">
    <property type="entry name" value="PGRP"/>
</dbReference>
<dbReference type="InterPro" id="IPR006619">
    <property type="entry name" value="PGRP_domain_met/bac"/>
</dbReference>
<dbReference type="PANTHER" id="PTHR11022:SF66">
    <property type="entry name" value="N-ACETYLMURAMOYL-L-ALANINE AMIDASE"/>
    <property type="match status" value="1"/>
</dbReference>
<dbReference type="PANTHER" id="PTHR11022">
    <property type="entry name" value="PEPTIDOGLYCAN RECOGNITION PROTEIN"/>
    <property type="match status" value="1"/>
</dbReference>
<dbReference type="Pfam" id="PF01510">
    <property type="entry name" value="Amidase_2"/>
    <property type="match status" value="1"/>
</dbReference>
<dbReference type="SMART" id="SM00644">
    <property type="entry name" value="Ami_2"/>
    <property type="match status" value="1"/>
</dbReference>
<dbReference type="SMART" id="SM00701">
    <property type="entry name" value="PGRP"/>
    <property type="match status" value="1"/>
</dbReference>
<dbReference type="SUPFAM" id="SSF55846">
    <property type="entry name" value="N-acetylmuramoyl-L-alanine amidase-like"/>
    <property type="match status" value="1"/>
</dbReference>